<accession>A5GWV3</accession>
<protein>
    <recommendedName>
        <fullName evidence="1">Urease accessory protein UreD</fullName>
    </recommendedName>
</protein>
<gene>
    <name evidence="1" type="primary">ureD</name>
    <name type="ordered locus">SynRCC307_2459</name>
</gene>
<dbReference type="EMBL" id="CT978603">
    <property type="protein sequence ID" value="CAK29362.1"/>
    <property type="status" value="ALT_INIT"/>
    <property type="molecule type" value="Genomic_DNA"/>
</dbReference>
<dbReference type="SMR" id="A5GWV3"/>
<dbReference type="STRING" id="316278.SynRCC307_2459"/>
<dbReference type="KEGG" id="syr:SynRCC307_2459"/>
<dbReference type="eggNOG" id="COG0829">
    <property type="taxonomic scope" value="Bacteria"/>
</dbReference>
<dbReference type="HOGENOM" id="CLU_056339_4_0_3"/>
<dbReference type="OrthoDB" id="9798842at2"/>
<dbReference type="Proteomes" id="UP000001115">
    <property type="component" value="Chromosome"/>
</dbReference>
<dbReference type="GO" id="GO:0005737">
    <property type="term" value="C:cytoplasm"/>
    <property type="evidence" value="ECO:0007669"/>
    <property type="project" value="UniProtKB-SubCell"/>
</dbReference>
<dbReference type="GO" id="GO:0016151">
    <property type="term" value="F:nickel cation binding"/>
    <property type="evidence" value="ECO:0007669"/>
    <property type="project" value="UniProtKB-UniRule"/>
</dbReference>
<dbReference type="HAMAP" id="MF_01384">
    <property type="entry name" value="UreD"/>
    <property type="match status" value="1"/>
</dbReference>
<dbReference type="InterPro" id="IPR002669">
    <property type="entry name" value="UreD"/>
</dbReference>
<dbReference type="PANTHER" id="PTHR33643">
    <property type="entry name" value="UREASE ACCESSORY PROTEIN D"/>
    <property type="match status" value="1"/>
</dbReference>
<dbReference type="PANTHER" id="PTHR33643:SF1">
    <property type="entry name" value="UREASE ACCESSORY PROTEIN D"/>
    <property type="match status" value="1"/>
</dbReference>
<dbReference type="Pfam" id="PF01774">
    <property type="entry name" value="UreD"/>
    <property type="match status" value="1"/>
</dbReference>
<name>URED_SYNR3</name>
<evidence type="ECO:0000255" key="1">
    <source>
        <dbReference type="HAMAP-Rule" id="MF_01384"/>
    </source>
</evidence>
<evidence type="ECO:0000305" key="2"/>
<keyword id="KW-0143">Chaperone</keyword>
<keyword id="KW-0963">Cytoplasm</keyword>
<keyword id="KW-0996">Nickel insertion</keyword>
<keyword id="KW-1185">Reference proteome</keyword>
<proteinExistence type="inferred from homology"/>
<sequence>MTDTPNQLPPWRGSVSLDFELAADGTTQWQGGARSPLKLLRHFTAGDGRCVMPLLHTAGGLVGGDQLEIALHAAAGSRSFLTSVAAQKIYGSRGRSRVQPQGRWAQITLQAELEAGADLEWLPQETVVFAGALLEQQQQITVAPGASWLGADVVRLGRTARGEDLGAGRFCNSLSIRRGEQWSVVERLSLEQEQLPNPHGMGGEPVLGTLIWIAPEPLENEQLAQLLKGGRADREGLSGTMAIGPLEPGLIARYRGGSSQAARLWFFRLWRRIRAVQGLSEPSWPRTWPFQEAELALNPEPATTATTAAR</sequence>
<feature type="chain" id="PRO_0000340528" description="Urease accessory protein UreD">
    <location>
        <begin position="1"/>
        <end position="310"/>
    </location>
</feature>
<reference key="1">
    <citation type="submission" date="2006-05" db="EMBL/GenBank/DDBJ databases">
        <authorList>
            <consortium name="Genoscope"/>
        </authorList>
    </citation>
    <scope>NUCLEOTIDE SEQUENCE [LARGE SCALE GENOMIC DNA]</scope>
    <source>
        <strain>RCC307</strain>
    </source>
</reference>
<comment type="function">
    <text evidence="1">Required for maturation of urease via the functional incorporation of the urease nickel metallocenter.</text>
</comment>
<comment type="subunit">
    <text evidence="1">UreD, UreF and UreG form a complex that acts as a GTP-hydrolysis-dependent molecular chaperone, activating the urease apoprotein by helping to assemble the nickel containing metallocenter of UreC. The UreE protein probably delivers the nickel.</text>
</comment>
<comment type="subcellular location">
    <subcellularLocation>
        <location evidence="1">Cytoplasm</location>
    </subcellularLocation>
</comment>
<comment type="similarity">
    <text evidence="1">Belongs to the UreD family.</text>
</comment>
<comment type="sequence caution" evidence="2">
    <conflict type="erroneous initiation">
        <sequence resource="EMBL-CDS" id="CAK29362"/>
    </conflict>
</comment>
<organism>
    <name type="scientific">Synechococcus sp. (strain RCC307)</name>
    <dbReference type="NCBI Taxonomy" id="316278"/>
    <lineage>
        <taxon>Bacteria</taxon>
        <taxon>Bacillati</taxon>
        <taxon>Cyanobacteriota</taxon>
        <taxon>Cyanophyceae</taxon>
        <taxon>Synechococcales</taxon>
        <taxon>Synechococcaceae</taxon>
        <taxon>Synechococcus</taxon>
    </lineage>
</organism>